<organism>
    <name type="scientific">Aspergillus fumigatus (strain CBS 144.89 / FGSC A1163 / CEA10)</name>
    <name type="common">Neosartorya fumigata</name>
    <dbReference type="NCBI Taxonomy" id="451804"/>
    <lineage>
        <taxon>Eukaryota</taxon>
        <taxon>Fungi</taxon>
        <taxon>Dikarya</taxon>
        <taxon>Ascomycota</taxon>
        <taxon>Pezizomycotina</taxon>
        <taxon>Eurotiomycetes</taxon>
        <taxon>Eurotiomycetidae</taxon>
        <taxon>Eurotiales</taxon>
        <taxon>Aspergillaceae</taxon>
        <taxon>Aspergillus</taxon>
        <taxon>Aspergillus subgen. Fumigati</taxon>
    </lineage>
</organism>
<reference key="1">
    <citation type="journal article" date="2008" name="PLoS Genet.">
        <title>Genomic islands in the pathogenic filamentous fungus Aspergillus fumigatus.</title>
        <authorList>
            <person name="Fedorova N.D."/>
            <person name="Khaldi N."/>
            <person name="Joardar V.S."/>
            <person name="Maiti R."/>
            <person name="Amedeo P."/>
            <person name="Anderson M.J."/>
            <person name="Crabtree J."/>
            <person name="Silva J.C."/>
            <person name="Badger J.H."/>
            <person name="Albarraq A."/>
            <person name="Angiuoli S."/>
            <person name="Bussey H."/>
            <person name="Bowyer P."/>
            <person name="Cotty P.J."/>
            <person name="Dyer P.S."/>
            <person name="Egan A."/>
            <person name="Galens K."/>
            <person name="Fraser-Liggett C.M."/>
            <person name="Haas B.J."/>
            <person name="Inman J.M."/>
            <person name="Kent R."/>
            <person name="Lemieux S."/>
            <person name="Malavazi I."/>
            <person name="Orvis J."/>
            <person name="Roemer T."/>
            <person name="Ronning C.M."/>
            <person name="Sundaram J.P."/>
            <person name="Sutton G."/>
            <person name="Turner G."/>
            <person name="Venter J.C."/>
            <person name="White O.R."/>
            <person name="Whitty B.R."/>
            <person name="Youngman P."/>
            <person name="Wolfe K.H."/>
            <person name="Goldman G.H."/>
            <person name="Wortman J.R."/>
            <person name="Jiang B."/>
            <person name="Denning D.W."/>
            <person name="Nierman W.C."/>
        </authorList>
    </citation>
    <scope>NUCLEOTIDE SEQUENCE [LARGE SCALE GENOMIC DNA]</scope>
    <source>
        <strain>CBS 144.89 / FGSC A1163 / CEA10</strain>
    </source>
</reference>
<keyword id="KW-0539">Nucleus</keyword>
<keyword id="KW-0687">Ribonucleoprotein</keyword>
<keyword id="KW-0690">Ribosome biogenesis</keyword>
<keyword id="KW-0698">rRNA processing</keyword>
<proteinExistence type="inferred from homology"/>
<dbReference type="EMBL" id="DS499594">
    <property type="protein sequence ID" value="EDP56168.1"/>
    <property type="molecule type" value="Genomic_DNA"/>
</dbReference>
<dbReference type="EnsemblFungi" id="EDP56168">
    <property type="protein sequence ID" value="EDP56168"/>
    <property type="gene ID" value="AFUB_008740"/>
</dbReference>
<dbReference type="HOGENOM" id="CLU_018705_0_1_1"/>
<dbReference type="OrthoDB" id="96505at5052"/>
<dbReference type="PhylomeDB" id="B0XQ54"/>
<dbReference type="Proteomes" id="UP000001699">
    <property type="component" value="Unassembled WGS sequence"/>
</dbReference>
<dbReference type="GO" id="GO:0005730">
    <property type="term" value="C:nucleolus"/>
    <property type="evidence" value="ECO:0007669"/>
    <property type="project" value="UniProtKB-SubCell"/>
</dbReference>
<dbReference type="GO" id="GO:0032040">
    <property type="term" value="C:small-subunit processome"/>
    <property type="evidence" value="ECO:0007669"/>
    <property type="project" value="EnsemblFungi"/>
</dbReference>
<dbReference type="GO" id="GO:0019843">
    <property type="term" value="F:rRNA binding"/>
    <property type="evidence" value="ECO:0007669"/>
    <property type="project" value="EnsemblFungi"/>
</dbReference>
<dbReference type="GO" id="GO:0034511">
    <property type="term" value="F:U3 snoRNA binding"/>
    <property type="evidence" value="ECO:0007669"/>
    <property type="project" value="EnsemblFungi"/>
</dbReference>
<dbReference type="GO" id="GO:0000462">
    <property type="term" value="P:maturation of SSU-rRNA from tricistronic rRNA transcript (SSU-rRNA, 5.8S rRNA, LSU-rRNA)"/>
    <property type="evidence" value="ECO:0007669"/>
    <property type="project" value="EnsemblFungi"/>
</dbReference>
<dbReference type="FunFam" id="3.40.50.300:FF:002356">
    <property type="entry name" value="U3 small nucleolar RNA-associated protein 25"/>
    <property type="match status" value="1"/>
</dbReference>
<dbReference type="Gene3D" id="3.40.50.300">
    <property type="entry name" value="P-loop containing nucleotide triphosphate hydrolases"/>
    <property type="match status" value="1"/>
</dbReference>
<dbReference type="InterPro" id="IPR027417">
    <property type="entry name" value="P-loop_NTPase"/>
</dbReference>
<dbReference type="InterPro" id="IPR010678">
    <property type="entry name" value="UTP25"/>
</dbReference>
<dbReference type="InterPro" id="IPR053939">
    <property type="entry name" value="UTP25_C"/>
</dbReference>
<dbReference type="InterPro" id="IPR053940">
    <property type="entry name" value="UTP25_NTPase-like"/>
</dbReference>
<dbReference type="PANTHER" id="PTHR12933">
    <property type="entry name" value="ORF PROTEIN-RELATED"/>
    <property type="match status" value="1"/>
</dbReference>
<dbReference type="PANTHER" id="PTHR12933:SF0">
    <property type="entry name" value="U3 SMALL NUCLEOLAR RNA-ASSOCIATED PROTEIN 25 HOMOLOG"/>
    <property type="match status" value="1"/>
</dbReference>
<dbReference type="Pfam" id="PF06862">
    <property type="entry name" value="Utp25_C"/>
    <property type="match status" value="1"/>
</dbReference>
<dbReference type="Pfam" id="PF22916">
    <property type="entry name" value="UTP25_NTPase-like"/>
    <property type="match status" value="1"/>
</dbReference>
<name>UTP25_ASPFC</name>
<comment type="function">
    <text evidence="1">DEAD-box RNA helicase-like protein required for pre-18S rRNA processing, specifically at sites A0, A1, and A2.</text>
</comment>
<comment type="subunit">
    <text evidence="1">Component of the ribosomal small subunit (SSU) processome composed of at least 40 protein subunits and snoRNA U3.</text>
</comment>
<comment type="subcellular location">
    <subcellularLocation>
        <location evidence="1">Nucleus</location>
        <location evidence="1">Nucleolus</location>
    </subcellularLocation>
</comment>
<comment type="similarity">
    <text evidence="3">Belongs to the UTP25 family.</text>
</comment>
<feature type="chain" id="PRO_0000408101" description="U3 small nucleolar RNA-associated protein 25">
    <location>
        <begin position="1"/>
        <end position="671"/>
    </location>
</feature>
<feature type="region of interest" description="Disordered" evidence="2">
    <location>
        <begin position="1"/>
        <end position="110"/>
    </location>
</feature>
<feature type="compositionally biased region" description="Acidic residues" evidence="2">
    <location>
        <begin position="10"/>
        <end position="20"/>
    </location>
</feature>
<feature type="compositionally biased region" description="Basic and acidic residues" evidence="2">
    <location>
        <begin position="49"/>
        <end position="59"/>
    </location>
</feature>
<feature type="compositionally biased region" description="Acidic residues" evidence="2">
    <location>
        <begin position="66"/>
        <end position="93"/>
    </location>
</feature>
<evidence type="ECO:0000250" key="1"/>
<evidence type="ECO:0000256" key="2">
    <source>
        <dbReference type="SAM" id="MobiDB-lite"/>
    </source>
</evidence>
<evidence type="ECO:0000305" key="3"/>
<accession>B0XQ54</accession>
<sequence length="671" mass="76208">MDHETQMDDVLSDSDDDEDQQTARPYNELIQLLQVNTEPKGPARKRRKVEYNGGEKRDFVPAANGEEVDAALQGDDDLQEQEPSDEEEEDHPEEADGNHGSDDEEDANDPFETHFSAIDENKLALKIKSAEEKKWKNAKKEISSGLKLVRAIPDVGEGDVSLLPAMKHFSSVKLKKKLCGPATERIPEISGDAQHIAPYIFNYQDVLYGARTTSNSSAMRDILAVHAVNHILKTRDRVLKNNSRIAKEQDADLDLRDQGFTRPKVLYLLPTRQACVRAVESITRFFQPEQQENKKRFLDSFSAADDKSWENKPEDFRELFGGNDDDMFRLGLKFTRKTMKYFSQFYNSDIILASPLGLRTIMDQADVKKRDHDFLSSVELVIVDHADALLMQNWDHVGYILDRLNLQPKEAHGCDFSRVRTWYLDNHARFVRQMIVSASFITPEINSLFSTHMQNFAGKVKVTPVYVGAISEVPLPVSVKQTFSRFDSLTPTKDPDARFKHFTTTVLSSLVRNITSSRDKSSAGGTLIFIPSYLDFVRVRNYFATSSQTTNVSFGAISEYSEVREMTRARTHFMNGRHAVLLYTERLHHFRRYQLRGVKRIVMYGVPENPLFWGEIVGFLGLDPAGVVDAAEGGVRALFSKWDALKLERIVGTKRVGNMLREKGGDTFTFV</sequence>
<protein>
    <recommendedName>
        <fullName>U3 small nucleolar RNA-associated protein 25</fullName>
        <shortName>U3 snoRNA-associated protein 25</shortName>
    </recommendedName>
    <alternativeName>
        <fullName>U three protein 25</fullName>
    </alternativeName>
</protein>
<gene>
    <name type="primary">utp25</name>
    <name type="ORF">AFUB_008740</name>
</gene>